<sequence length="299" mass="32379">MSLYPSLEDLKVDKVIQAQTAYSANPASQAFVLVDASAALPPDGNLYPKLYPELSQYMGLSLNEAEICESMPMVSGAPAQGQLVARPSSVNYMVAPVTGNDAGIRRAEIKQGIREVILCKDQDGKIGLRLKSIDNGIFVQLVQANSPASLVGLRFGDQVLQINGENCAGWSSDKAHKVLKQAFGEKITMTIRDRPFERTVTMHKDSSGHVGFIFKSGKITSIVKDSSAARNGLLTDHHICEINGQNVIGLKDAQIADILSTAGTVVTITIMPTFIFEHIIKRMAPSIMKSLMDHTIPEV</sequence>
<gene>
    <name type="primary">Sdcbp</name>
</gene>
<protein>
    <recommendedName>
        <fullName>Syntenin-1</fullName>
    </recommendedName>
    <alternativeName>
        <fullName>Scaffold protein Pbp1</fullName>
    </alternativeName>
    <alternativeName>
        <fullName>Syndecan-binding protein 1</fullName>
    </alternativeName>
</protein>
<feature type="initiator methionine" description="Removed" evidence="2">
    <location>
        <position position="1"/>
    </location>
</feature>
<feature type="chain" id="PRO_0000184002" description="Syntenin-1">
    <location>
        <begin position="2"/>
        <end position="299"/>
    </location>
</feature>
<feature type="domain" description="PDZ 1" evidence="4">
    <location>
        <begin position="115"/>
        <end position="194"/>
    </location>
</feature>
<feature type="domain" description="PDZ 2" evidence="4">
    <location>
        <begin position="199"/>
        <end position="273"/>
    </location>
</feature>
<feature type="region of interest" description="Interaction with PDCD6IP" evidence="5">
    <location>
        <begin position="2"/>
        <end position="103"/>
    </location>
</feature>
<feature type="short sequence motif" description="LYPX(n)L motif 1" evidence="8">
    <location>
        <begin position="3"/>
        <end position="7"/>
    </location>
</feature>
<feature type="short sequence motif" description="LYPX(n)L motif 2" evidence="8">
    <location>
        <begin position="46"/>
        <end position="50"/>
    </location>
</feature>
<feature type="short sequence motif" description="LYPX(n)L motif 3" evidence="8">
    <location>
        <begin position="50"/>
        <end position="54"/>
    </location>
</feature>
<feature type="binding site" evidence="2">
    <location>
        <begin position="251"/>
        <end position="252"/>
    </location>
    <ligand>
        <name>a 1,2-diacyl-sn-glycero-3-phospho-(1D-myo-inositol-4,5-bisphosphate)</name>
        <dbReference type="ChEBI" id="CHEBI:58456"/>
    </ligand>
</feature>
<feature type="modified residue" description="N-acetylserine" evidence="2">
    <location>
        <position position="2"/>
    </location>
</feature>
<feature type="modified residue" description="Phosphoserine" evidence="2">
    <location>
        <position position="6"/>
    </location>
</feature>
<feature type="modified residue" description="Phosphotyrosine" evidence="2">
    <location>
        <position position="47"/>
    </location>
</feature>
<feature type="mutagenesis site" description="No loss of interaction with PDCD6IP. Loss of interaction with PDCD6IP; when associated with 46-A--A-47 and 50-A--A-51." evidence="5">
    <original>YP</original>
    <variation>AA</variation>
    <location>
        <begin position="4"/>
        <end position="5"/>
    </location>
</feature>
<feature type="mutagenesis site" description="No loss of interaction with PDCD6IP. Loss of interaction with PDCD6IP; when associated with 4-A--A-5 and 51-A--A-52." evidence="5">
    <original>YP</original>
    <variation>AA</variation>
    <location>
        <begin position="47"/>
        <end position="48"/>
    </location>
</feature>
<feature type="mutagenesis site" description="No loss of interaction with PDCD6IP. Loss of interaction with PDCD6IP; when associated with 4-A--A-5 and 47-A--A-48." evidence="5">
    <original>YP</original>
    <variation>AA</variation>
    <location>
        <begin position="51"/>
        <end position="52"/>
    </location>
</feature>
<name>SDCB1_MOUSE</name>
<organism>
    <name type="scientific">Mus musculus</name>
    <name type="common">Mouse</name>
    <dbReference type="NCBI Taxonomy" id="10090"/>
    <lineage>
        <taxon>Eukaryota</taxon>
        <taxon>Metazoa</taxon>
        <taxon>Chordata</taxon>
        <taxon>Craniata</taxon>
        <taxon>Vertebrata</taxon>
        <taxon>Euteleostomi</taxon>
        <taxon>Mammalia</taxon>
        <taxon>Eutheria</taxon>
        <taxon>Euarchontoglires</taxon>
        <taxon>Glires</taxon>
        <taxon>Rodentia</taxon>
        <taxon>Myomorpha</taxon>
        <taxon>Muroidea</taxon>
        <taxon>Muridae</taxon>
        <taxon>Murinae</taxon>
        <taxon>Mus</taxon>
        <taxon>Mus</taxon>
    </lineage>
</organism>
<accession>O08992</accession>
<accession>A2AKJ7</accession>
<accession>Q544P5</accession>
<proteinExistence type="evidence at protein level"/>
<comment type="function">
    <text evidence="2 7">Multifunctional adapter protein involved in diverse array of functions including trafficking of transmembrane proteins, neuro and immunomodulation, exosome biogenesis, and tumorigenesis. Positively regulates TGFB1-mediated SMAD2/3 activation and TGFB1-induced epithelial-to-mesenchymal transition (EMT) and cell migration in various cell types. May increase TGFB1 signaling by enhancing cell-surface expression of TGFR1 by preventing the interaction between TGFR1 and CAV1 and subsequent CAV1-dependent internalization and degradation of TGFR1. In concert with SDC1/4 and PDCD6IP, regulates exosome biogenesis (By similarity). Regulates migration, growth, proliferation, and cell cycle progression in a variety of cancer types (PubMed:26539120). In adherens junctions may function to couple syndecans to cytoskeletal proteins or signaling components. Seems to couple transcription factor SOX4 to the IL-5 receptor (IL5RA). May also play a role in vesicular trafficking. Seems to be required for the targeting of TGFA to the cell surface in the early secretory pathway (By similarity).</text>
</comment>
<comment type="subunit">
    <text evidence="2 3 5 6">Monomer and homodimer. Interacts with SDC1, SDC2, SDC3, SDC4, NRXN2, EPHA7, EPHB1, NF2 isoform 1, TGFA, IL5RA, NFASC, SDCBP2 and PTPRJ (By similarity). Interacts with PDCD6IP (PubMed:22660413). Forms a complex with PDCD6IP and SDC2 (By similarity). Interacts (via C-terminus) with TGFBR1 (By similarity). Binds to FZD7; this interaction is increased by inositol trisphosphate (IP3) (By similarity). Interacts with SMO (PubMed:25644602).</text>
</comment>
<comment type="interaction">
    <interactant intactId="EBI-538265">
        <id>O08992</id>
    </interactant>
    <interactant intactId="EBI-8107507">
        <id>P52795</id>
        <label>Efnb1</label>
    </interactant>
    <organismsDiffer>false</organismsDiffer>
    <experiments>3</experiments>
</comment>
<comment type="interaction">
    <interactant intactId="EBI-538265">
        <id>O08992</id>
    </interactant>
    <interactant intactId="EBI-641897">
        <id>Q9WU78</id>
        <label>Pdcd6ip</label>
    </interactant>
    <organismsDiffer>false</organismsDiffer>
    <experiments>3</experiments>
</comment>
<comment type="subcellular location">
    <subcellularLocation>
        <location evidence="2">Cell junction</location>
        <location evidence="2">Focal adhesion</location>
    </subcellularLocation>
    <subcellularLocation>
        <location evidence="2">Cell junction</location>
        <location evidence="2">Adherens junction</location>
    </subcellularLocation>
    <subcellularLocation>
        <location evidence="2">Cell membrane</location>
        <topology evidence="2">Peripheral membrane protein</topology>
    </subcellularLocation>
    <subcellularLocation>
        <location evidence="2">Endoplasmic reticulum membrane</location>
        <topology evidence="2">Peripheral membrane protein</topology>
    </subcellularLocation>
    <subcellularLocation>
        <location evidence="2">Nucleus</location>
    </subcellularLocation>
    <subcellularLocation>
        <location evidence="2">Melanosome</location>
    </subcellularLocation>
    <subcellularLocation>
        <location evidence="2">Cytoplasm</location>
        <location evidence="2">Cytosol</location>
    </subcellularLocation>
    <subcellularLocation>
        <location evidence="2">Cytoplasm</location>
        <location evidence="2">Cytoskeleton</location>
    </subcellularLocation>
    <subcellularLocation>
        <location evidence="2">Secreted</location>
        <location evidence="2">Extracellular exosome</location>
    </subcellularLocation>
    <subcellularLocation>
        <location evidence="2">Membrane raft</location>
    </subcellularLocation>
    <text evidence="2">Mainly membrane-associated. Localized to adherens junctions, focal adhesions and endoplasmic reticulum. Colocalized with actin stress fibers. Also found in the nucleus. Identified by mass spectrometry in melanosome fractions from stage I to stage IV. Associated to the plasma membrane in the presence of FZD7 and phosphatidylinositol 4,5-bisphosphate (PIP2) (By similarity).</text>
</comment>
<comment type="PTM">
    <text evidence="1">Phosphorylated on tyrosine residues.</text>
</comment>
<evidence type="ECO:0000250" key="1"/>
<evidence type="ECO:0000250" key="2">
    <source>
        <dbReference type="UniProtKB" id="O00560"/>
    </source>
</evidence>
<evidence type="ECO:0000250" key="3">
    <source>
        <dbReference type="UniProtKB" id="Q9JI92"/>
    </source>
</evidence>
<evidence type="ECO:0000255" key="4">
    <source>
        <dbReference type="PROSITE-ProRule" id="PRU00143"/>
    </source>
</evidence>
<evidence type="ECO:0000269" key="5">
    <source>
    </source>
</evidence>
<evidence type="ECO:0000269" key="6">
    <source>
    </source>
</evidence>
<evidence type="ECO:0000269" key="7">
    <source>
    </source>
</evidence>
<evidence type="ECO:0000305" key="8">
    <source>
    </source>
</evidence>
<reference key="1">
    <citation type="submission" date="1997-06" db="EMBL/GenBank/DDBJ databases">
        <title>A new family of scaffold proteins.</title>
        <authorList>
            <person name="Burbelo P.D."/>
        </authorList>
    </citation>
    <scope>NUCLEOTIDE SEQUENCE [MRNA]</scope>
</reference>
<reference key="2">
    <citation type="submission" date="1997-05" db="EMBL/GenBank/DDBJ databases">
        <authorList>
            <person name="Hsu S.I.-H."/>
            <person name="Hentschel D.M."/>
            <person name="Bonventre J.V."/>
        </authorList>
    </citation>
    <scope>NUCLEOTIDE SEQUENCE [MRNA]</scope>
</reference>
<reference key="3">
    <citation type="journal article" date="2005" name="Science">
        <title>The transcriptional landscape of the mammalian genome.</title>
        <authorList>
            <person name="Carninci P."/>
            <person name="Kasukawa T."/>
            <person name="Katayama S."/>
            <person name="Gough J."/>
            <person name="Frith M.C."/>
            <person name="Maeda N."/>
            <person name="Oyama R."/>
            <person name="Ravasi T."/>
            <person name="Lenhard B."/>
            <person name="Wells C."/>
            <person name="Kodzius R."/>
            <person name="Shimokawa K."/>
            <person name="Bajic V.B."/>
            <person name="Brenner S.E."/>
            <person name="Batalov S."/>
            <person name="Forrest A.R."/>
            <person name="Zavolan M."/>
            <person name="Davis M.J."/>
            <person name="Wilming L.G."/>
            <person name="Aidinis V."/>
            <person name="Allen J.E."/>
            <person name="Ambesi-Impiombato A."/>
            <person name="Apweiler R."/>
            <person name="Aturaliya R.N."/>
            <person name="Bailey T.L."/>
            <person name="Bansal M."/>
            <person name="Baxter L."/>
            <person name="Beisel K.W."/>
            <person name="Bersano T."/>
            <person name="Bono H."/>
            <person name="Chalk A.M."/>
            <person name="Chiu K.P."/>
            <person name="Choudhary V."/>
            <person name="Christoffels A."/>
            <person name="Clutterbuck D.R."/>
            <person name="Crowe M.L."/>
            <person name="Dalla E."/>
            <person name="Dalrymple B.P."/>
            <person name="de Bono B."/>
            <person name="Della Gatta G."/>
            <person name="di Bernardo D."/>
            <person name="Down T."/>
            <person name="Engstrom P."/>
            <person name="Fagiolini M."/>
            <person name="Faulkner G."/>
            <person name="Fletcher C.F."/>
            <person name="Fukushima T."/>
            <person name="Furuno M."/>
            <person name="Futaki S."/>
            <person name="Gariboldi M."/>
            <person name="Georgii-Hemming P."/>
            <person name="Gingeras T.R."/>
            <person name="Gojobori T."/>
            <person name="Green R.E."/>
            <person name="Gustincich S."/>
            <person name="Harbers M."/>
            <person name="Hayashi Y."/>
            <person name="Hensch T.K."/>
            <person name="Hirokawa N."/>
            <person name="Hill D."/>
            <person name="Huminiecki L."/>
            <person name="Iacono M."/>
            <person name="Ikeo K."/>
            <person name="Iwama A."/>
            <person name="Ishikawa T."/>
            <person name="Jakt M."/>
            <person name="Kanapin A."/>
            <person name="Katoh M."/>
            <person name="Kawasawa Y."/>
            <person name="Kelso J."/>
            <person name="Kitamura H."/>
            <person name="Kitano H."/>
            <person name="Kollias G."/>
            <person name="Krishnan S.P."/>
            <person name="Kruger A."/>
            <person name="Kummerfeld S.K."/>
            <person name="Kurochkin I.V."/>
            <person name="Lareau L.F."/>
            <person name="Lazarevic D."/>
            <person name="Lipovich L."/>
            <person name="Liu J."/>
            <person name="Liuni S."/>
            <person name="McWilliam S."/>
            <person name="Madan Babu M."/>
            <person name="Madera M."/>
            <person name="Marchionni L."/>
            <person name="Matsuda H."/>
            <person name="Matsuzawa S."/>
            <person name="Miki H."/>
            <person name="Mignone F."/>
            <person name="Miyake S."/>
            <person name="Morris K."/>
            <person name="Mottagui-Tabar S."/>
            <person name="Mulder N."/>
            <person name="Nakano N."/>
            <person name="Nakauchi H."/>
            <person name="Ng P."/>
            <person name="Nilsson R."/>
            <person name="Nishiguchi S."/>
            <person name="Nishikawa S."/>
            <person name="Nori F."/>
            <person name="Ohara O."/>
            <person name="Okazaki Y."/>
            <person name="Orlando V."/>
            <person name="Pang K.C."/>
            <person name="Pavan W.J."/>
            <person name="Pavesi G."/>
            <person name="Pesole G."/>
            <person name="Petrovsky N."/>
            <person name="Piazza S."/>
            <person name="Reed J."/>
            <person name="Reid J.F."/>
            <person name="Ring B.Z."/>
            <person name="Ringwald M."/>
            <person name="Rost B."/>
            <person name="Ruan Y."/>
            <person name="Salzberg S.L."/>
            <person name="Sandelin A."/>
            <person name="Schneider C."/>
            <person name="Schoenbach C."/>
            <person name="Sekiguchi K."/>
            <person name="Semple C.A."/>
            <person name="Seno S."/>
            <person name="Sessa L."/>
            <person name="Sheng Y."/>
            <person name="Shibata Y."/>
            <person name="Shimada H."/>
            <person name="Shimada K."/>
            <person name="Silva D."/>
            <person name="Sinclair B."/>
            <person name="Sperling S."/>
            <person name="Stupka E."/>
            <person name="Sugiura K."/>
            <person name="Sultana R."/>
            <person name="Takenaka Y."/>
            <person name="Taki K."/>
            <person name="Tammoja K."/>
            <person name="Tan S.L."/>
            <person name="Tang S."/>
            <person name="Taylor M.S."/>
            <person name="Tegner J."/>
            <person name="Teichmann S.A."/>
            <person name="Ueda H.R."/>
            <person name="van Nimwegen E."/>
            <person name="Verardo R."/>
            <person name="Wei C.L."/>
            <person name="Yagi K."/>
            <person name="Yamanishi H."/>
            <person name="Zabarovsky E."/>
            <person name="Zhu S."/>
            <person name="Zimmer A."/>
            <person name="Hide W."/>
            <person name="Bult C."/>
            <person name="Grimmond S.M."/>
            <person name="Teasdale R.D."/>
            <person name="Liu E.T."/>
            <person name="Brusic V."/>
            <person name="Quackenbush J."/>
            <person name="Wahlestedt C."/>
            <person name="Mattick J.S."/>
            <person name="Hume D.A."/>
            <person name="Kai C."/>
            <person name="Sasaki D."/>
            <person name="Tomaru Y."/>
            <person name="Fukuda S."/>
            <person name="Kanamori-Katayama M."/>
            <person name="Suzuki M."/>
            <person name="Aoki J."/>
            <person name="Arakawa T."/>
            <person name="Iida J."/>
            <person name="Imamura K."/>
            <person name="Itoh M."/>
            <person name="Kato T."/>
            <person name="Kawaji H."/>
            <person name="Kawagashira N."/>
            <person name="Kawashima T."/>
            <person name="Kojima M."/>
            <person name="Kondo S."/>
            <person name="Konno H."/>
            <person name="Nakano K."/>
            <person name="Ninomiya N."/>
            <person name="Nishio T."/>
            <person name="Okada M."/>
            <person name="Plessy C."/>
            <person name="Shibata K."/>
            <person name="Shiraki T."/>
            <person name="Suzuki S."/>
            <person name="Tagami M."/>
            <person name="Waki K."/>
            <person name="Watahiki A."/>
            <person name="Okamura-Oho Y."/>
            <person name="Suzuki H."/>
            <person name="Kawai J."/>
            <person name="Hayashizaki Y."/>
        </authorList>
    </citation>
    <scope>NUCLEOTIDE SEQUENCE [LARGE SCALE MRNA]</scope>
    <source>
        <strain>C57BL/6J</strain>
        <strain>DBA/2J</strain>
        <strain>NOD</strain>
        <tissue>Amnion</tissue>
        <tissue>Bone marrow</tissue>
        <tissue>Heart</tissue>
        <tissue>Kidney</tissue>
        <tissue>Liver</tissue>
        <tissue>Thymus</tissue>
    </source>
</reference>
<reference key="4">
    <citation type="journal article" date="2009" name="PLoS Biol.">
        <title>Lineage-specific biology revealed by a finished genome assembly of the mouse.</title>
        <authorList>
            <person name="Church D.M."/>
            <person name="Goodstadt L."/>
            <person name="Hillier L.W."/>
            <person name="Zody M.C."/>
            <person name="Goldstein S."/>
            <person name="She X."/>
            <person name="Bult C.J."/>
            <person name="Agarwala R."/>
            <person name="Cherry J.L."/>
            <person name="DiCuccio M."/>
            <person name="Hlavina W."/>
            <person name="Kapustin Y."/>
            <person name="Meric P."/>
            <person name="Maglott D."/>
            <person name="Birtle Z."/>
            <person name="Marques A.C."/>
            <person name="Graves T."/>
            <person name="Zhou S."/>
            <person name="Teague B."/>
            <person name="Potamousis K."/>
            <person name="Churas C."/>
            <person name="Place M."/>
            <person name="Herschleb J."/>
            <person name="Runnheim R."/>
            <person name="Forrest D."/>
            <person name="Amos-Landgraf J."/>
            <person name="Schwartz D.C."/>
            <person name="Cheng Z."/>
            <person name="Lindblad-Toh K."/>
            <person name="Eichler E.E."/>
            <person name="Ponting C.P."/>
        </authorList>
    </citation>
    <scope>NUCLEOTIDE SEQUENCE [LARGE SCALE GENOMIC DNA]</scope>
    <source>
        <strain>C57BL/6J</strain>
    </source>
</reference>
<reference key="5">
    <citation type="journal article" date="2004" name="Genome Res.">
        <title>The status, quality, and expansion of the NIH full-length cDNA project: the Mammalian Gene Collection (MGC).</title>
        <authorList>
            <consortium name="The MGC Project Team"/>
        </authorList>
    </citation>
    <scope>NUCLEOTIDE SEQUENCE [LARGE SCALE MRNA]</scope>
</reference>
<reference key="6">
    <citation type="journal article" date="2010" name="Cell">
        <title>A tissue-specific atlas of mouse protein phosphorylation and expression.</title>
        <authorList>
            <person name="Huttlin E.L."/>
            <person name="Jedrychowski M.P."/>
            <person name="Elias J.E."/>
            <person name="Goswami T."/>
            <person name="Rad R."/>
            <person name="Beausoleil S.A."/>
            <person name="Villen J."/>
            <person name="Haas W."/>
            <person name="Sowa M.E."/>
            <person name="Gygi S.P."/>
        </authorList>
    </citation>
    <scope>IDENTIFICATION BY MASS SPECTROMETRY [LARGE SCALE ANALYSIS]</scope>
    <source>
        <tissue>Lung</tissue>
        <tissue>Pancreas</tissue>
        <tissue>Spleen</tissue>
        <tissue>Testis</tissue>
    </source>
</reference>
<reference key="7">
    <citation type="journal article" date="2012" name="Nat. Cell Biol.">
        <title>Syndecan-syntenin-ALIX regulates the biogenesis of exosomes.</title>
        <authorList>
            <person name="Baietti M.F."/>
            <person name="Zhang Z."/>
            <person name="Mortier E."/>
            <person name="Melchior A."/>
            <person name="Degeest G."/>
            <person name="Geeraerts A."/>
            <person name="Ivarsson Y."/>
            <person name="Depoortere F."/>
            <person name="Coomans C."/>
            <person name="Vermeiren E."/>
            <person name="Zimmermann P."/>
            <person name="David G."/>
        </authorList>
    </citation>
    <scope>INTERACTION WITH PDCD6IP</scope>
    <scope>DOMAIN LYPX(N)L MOTIF</scope>
    <scope>MUTAGENESIS OF 4-ALA--ALA-5; 47-ALA--ALA-48 AND 51-ALA--ALA-52</scope>
</reference>
<reference key="8">
    <citation type="journal article" date="2015" name="Front. Pharmacol.">
        <title>Syntenin controls migration, growth, proliferation, and cell cycle progression in cancer cells.</title>
        <authorList>
            <person name="Kashyap R."/>
            <person name="Roucourt B."/>
            <person name="Lembo F."/>
            <person name="Fares J."/>
            <person name="Carcavilla A.M."/>
            <person name="Restouin A."/>
            <person name="Zimmermann P."/>
            <person name="Ghossoub R."/>
        </authorList>
    </citation>
    <scope>FUNCTION</scope>
</reference>
<reference key="9">
    <citation type="journal article" date="2015" name="Genes Dev.">
        <title>Bifurcating action of Smoothened in Hedgehog signaling is mediated by Dlg5.</title>
        <authorList>
            <person name="Chong Y.C."/>
            <person name="Mann R.K."/>
            <person name="Zhao C."/>
            <person name="Kato M."/>
            <person name="Beachy P.A."/>
        </authorList>
    </citation>
    <scope>INTERACTION WITH SMO</scope>
</reference>
<dbReference type="EMBL" id="AF003693">
    <property type="protein sequence ID" value="AAB61293.1"/>
    <property type="molecule type" value="mRNA"/>
</dbReference>
<dbReference type="EMBL" id="AK028429">
    <property type="protein sequence ID" value="BAC25946.1"/>
    <property type="molecule type" value="mRNA"/>
</dbReference>
<dbReference type="EMBL" id="AK033412">
    <property type="protein sequence ID" value="BAC28275.1"/>
    <property type="molecule type" value="mRNA"/>
</dbReference>
<dbReference type="EMBL" id="AK146085">
    <property type="protein sequence ID" value="BAE26889.1"/>
    <property type="molecule type" value="mRNA"/>
</dbReference>
<dbReference type="EMBL" id="AK150278">
    <property type="protein sequence ID" value="BAE29434.1"/>
    <property type="molecule type" value="mRNA"/>
</dbReference>
<dbReference type="EMBL" id="AK150321">
    <property type="protein sequence ID" value="BAE29466.1"/>
    <property type="molecule type" value="mRNA"/>
</dbReference>
<dbReference type="EMBL" id="AK150623">
    <property type="protein sequence ID" value="BAE29713.1"/>
    <property type="molecule type" value="mRNA"/>
</dbReference>
<dbReference type="EMBL" id="AK150721">
    <property type="protein sequence ID" value="BAE29799.1"/>
    <property type="molecule type" value="mRNA"/>
</dbReference>
<dbReference type="EMBL" id="AK150801">
    <property type="protein sequence ID" value="BAE29864.1"/>
    <property type="molecule type" value="mRNA"/>
</dbReference>
<dbReference type="EMBL" id="AK152017">
    <property type="protein sequence ID" value="BAE30879.1"/>
    <property type="molecule type" value="mRNA"/>
</dbReference>
<dbReference type="EMBL" id="AK152434">
    <property type="protein sequence ID" value="BAE31216.1"/>
    <property type="molecule type" value="mRNA"/>
</dbReference>
<dbReference type="EMBL" id="AK152552">
    <property type="protein sequence ID" value="BAE31306.1"/>
    <property type="molecule type" value="mRNA"/>
</dbReference>
<dbReference type="EMBL" id="AK159677">
    <property type="protein sequence ID" value="BAE35280.1"/>
    <property type="molecule type" value="mRNA"/>
</dbReference>
<dbReference type="EMBL" id="AK167513">
    <property type="protein sequence ID" value="BAE39588.1"/>
    <property type="molecule type" value="mRNA"/>
</dbReference>
<dbReference type="EMBL" id="AK168004">
    <property type="protein sequence ID" value="BAE39992.1"/>
    <property type="molecule type" value="mRNA"/>
</dbReference>
<dbReference type="EMBL" id="AK168777">
    <property type="protein sequence ID" value="BAE40613.1"/>
    <property type="molecule type" value="mRNA"/>
</dbReference>
<dbReference type="EMBL" id="AK169219">
    <property type="protein sequence ID" value="BAE40990.1"/>
    <property type="molecule type" value="mRNA"/>
</dbReference>
<dbReference type="EMBL" id="AK169687">
    <property type="protein sequence ID" value="BAE41305.1"/>
    <property type="molecule type" value="mRNA"/>
</dbReference>
<dbReference type="EMBL" id="AK171162">
    <property type="protein sequence ID" value="BAE42284.1"/>
    <property type="molecule type" value="mRNA"/>
</dbReference>
<dbReference type="EMBL" id="AL772306">
    <property type="status" value="NOT_ANNOTATED_CDS"/>
    <property type="molecule type" value="Genomic_DNA"/>
</dbReference>
<dbReference type="EMBL" id="BC019400">
    <property type="protein sequence ID" value="AAH19400.1"/>
    <property type="molecule type" value="mRNA"/>
</dbReference>
<dbReference type="CCDS" id="CCDS51110.1"/>
<dbReference type="RefSeq" id="NP_001091697.1">
    <property type="nucleotide sequence ID" value="NM_001098227.2"/>
</dbReference>
<dbReference type="RefSeq" id="NP_001411920.1">
    <property type="nucleotide sequence ID" value="NM_001424991.1"/>
</dbReference>
<dbReference type="RefSeq" id="NP_001411921.1">
    <property type="nucleotide sequence ID" value="NM_001424992.1"/>
</dbReference>
<dbReference type="RefSeq" id="NP_001411922.1">
    <property type="nucleotide sequence ID" value="NM_001424993.1"/>
</dbReference>
<dbReference type="RefSeq" id="NP_001411923.1">
    <property type="nucleotide sequence ID" value="NM_001424994.1"/>
</dbReference>
<dbReference type="RefSeq" id="NP_058087.2">
    <property type="nucleotide sequence ID" value="NM_016807.2"/>
</dbReference>
<dbReference type="RefSeq" id="XP_006538147.1">
    <property type="nucleotide sequence ID" value="XM_006538084.3"/>
</dbReference>
<dbReference type="SMR" id="O08992"/>
<dbReference type="BioGRID" id="207300">
    <property type="interactions" value="33"/>
</dbReference>
<dbReference type="ComplexPortal" id="CPX-3283">
    <property type="entry name" value="Syndecan-1-syntenin-1-ALIX complex"/>
</dbReference>
<dbReference type="CORUM" id="O08992"/>
<dbReference type="FunCoup" id="O08992">
    <property type="interactions" value="2018"/>
</dbReference>
<dbReference type="IntAct" id="O08992">
    <property type="interactions" value="9"/>
</dbReference>
<dbReference type="MINT" id="O08992"/>
<dbReference type="STRING" id="10090.ENSMUSP00000029912"/>
<dbReference type="ChEMBL" id="CHEMBL4739669"/>
<dbReference type="iPTMnet" id="O08992"/>
<dbReference type="PhosphoSitePlus" id="O08992"/>
<dbReference type="jPOST" id="O08992"/>
<dbReference type="PaxDb" id="10090-ENSMUSP00000029912"/>
<dbReference type="PeptideAtlas" id="O08992"/>
<dbReference type="ProteomicsDB" id="255376"/>
<dbReference type="Pumba" id="O08992"/>
<dbReference type="Antibodypedia" id="3216">
    <property type="antibodies" value="544 antibodies from 37 providers"/>
</dbReference>
<dbReference type="DNASU" id="53378"/>
<dbReference type="Ensembl" id="ENSMUST00000029912.11">
    <property type="protein sequence ID" value="ENSMUSP00000029912.5"/>
    <property type="gene ID" value="ENSMUSG00000028249.16"/>
</dbReference>
<dbReference type="GeneID" id="53378"/>
<dbReference type="KEGG" id="mmu:53378"/>
<dbReference type="UCSC" id="uc008rxn.1">
    <property type="organism name" value="mouse"/>
</dbReference>
<dbReference type="AGR" id="MGI:1337026"/>
<dbReference type="CTD" id="6386"/>
<dbReference type="MGI" id="MGI:1337026">
    <property type="gene designation" value="Sdcbp"/>
</dbReference>
<dbReference type="VEuPathDB" id="HostDB:ENSMUSG00000028249"/>
<dbReference type="eggNOG" id="KOG0849">
    <property type="taxonomic scope" value="Eukaryota"/>
</dbReference>
<dbReference type="GeneTree" id="ENSGT00940000154502"/>
<dbReference type="InParanoid" id="O08992"/>
<dbReference type="OMA" id="GIHEYQD"/>
<dbReference type="OrthoDB" id="10059177at2759"/>
<dbReference type="PhylomeDB" id="O08992"/>
<dbReference type="TreeFam" id="TF327131"/>
<dbReference type="Reactome" id="R-MMU-3928664">
    <property type="pathway name" value="Ephrin signaling"/>
</dbReference>
<dbReference type="Reactome" id="R-MMU-447043">
    <property type="pathway name" value="Neurofascin interactions"/>
</dbReference>
<dbReference type="Reactome" id="R-MMU-5213460">
    <property type="pathway name" value="RIPK1-mediated regulated necrosis"/>
</dbReference>
<dbReference type="Reactome" id="R-MMU-5675482">
    <property type="pathway name" value="Regulation of necroptotic cell death"/>
</dbReference>
<dbReference type="Reactome" id="R-MMU-6798695">
    <property type="pathway name" value="Neutrophil degranulation"/>
</dbReference>
<dbReference type="BioGRID-ORCS" id="53378">
    <property type="hits" value="2 hits in 79 CRISPR screens"/>
</dbReference>
<dbReference type="CD-CODE" id="CE726F99">
    <property type="entry name" value="Postsynaptic density"/>
</dbReference>
<dbReference type="ChiTaRS" id="Sdcbp">
    <property type="organism name" value="mouse"/>
</dbReference>
<dbReference type="PRO" id="PR:O08992"/>
<dbReference type="Proteomes" id="UP000000589">
    <property type="component" value="Chromosome 4"/>
</dbReference>
<dbReference type="RNAct" id="O08992">
    <property type="molecule type" value="protein"/>
</dbReference>
<dbReference type="Bgee" id="ENSMUSG00000028249">
    <property type="expression patterns" value="Expressed in stroma of bone marrow and 256 other cell types or tissues"/>
</dbReference>
<dbReference type="ExpressionAtlas" id="O08992">
    <property type="expression patterns" value="baseline and differential"/>
</dbReference>
<dbReference type="GO" id="GO:0005912">
    <property type="term" value="C:adherens junction"/>
    <property type="evidence" value="ECO:0007669"/>
    <property type="project" value="UniProtKB-SubCell"/>
</dbReference>
<dbReference type="GO" id="GO:0005856">
    <property type="term" value="C:cytoskeleton"/>
    <property type="evidence" value="ECO:0007669"/>
    <property type="project" value="UniProtKB-SubCell"/>
</dbReference>
<dbReference type="GO" id="GO:0005829">
    <property type="term" value="C:cytosol"/>
    <property type="evidence" value="ECO:0007669"/>
    <property type="project" value="UniProtKB-SubCell"/>
</dbReference>
<dbReference type="GO" id="GO:0005789">
    <property type="term" value="C:endoplasmic reticulum membrane"/>
    <property type="evidence" value="ECO:0007669"/>
    <property type="project" value="UniProtKB-SubCell"/>
</dbReference>
<dbReference type="GO" id="GO:0070062">
    <property type="term" value="C:extracellular exosome"/>
    <property type="evidence" value="ECO:0007669"/>
    <property type="project" value="Ensembl"/>
</dbReference>
<dbReference type="GO" id="GO:0005925">
    <property type="term" value="C:focal adhesion"/>
    <property type="evidence" value="ECO:0007669"/>
    <property type="project" value="UniProtKB-SubCell"/>
</dbReference>
<dbReference type="GO" id="GO:0005895">
    <property type="term" value="C:interleukin-5 receptor complex"/>
    <property type="evidence" value="ECO:0000315"/>
    <property type="project" value="UniProtKB"/>
</dbReference>
<dbReference type="GO" id="GO:0042470">
    <property type="term" value="C:melanosome"/>
    <property type="evidence" value="ECO:0007669"/>
    <property type="project" value="UniProtKB-SubCell"/>
</dbReference>
<dbReference type="GO" id="GO:0045121">
    <property type="term" value="C:membrane raft"/>
    <property type="evidence" value="ECO:0000250"/>
    <property type="project" value="UniProtKB"/>
</dbReference>
<dbReference type="GO" id="GO:0031965">
    <property type="term" value="C:nuclear membrane"/>
    <property type="evidence" value="ECO:0007669"/>
    <property type="project" value="Ensembl"/>
</dbReference>
<dbReference type="GO" id="GO:0005654">
    <property type="term" value="C:nucleoplasm"/>
    <property type="evidence" value="ECO:0007669"/>
    <property type="project" value="Ensembl"/>
</dbReference>
<dbReference type="GO" id="GO:0005886">
    <property type="term" value="C:plasma membrane"/>
    <property type="evidence" value="ECO:0000250"/>
    <property type="project" value="UniProtKB"/>
</dbReference>
<dbReference type="GO" id="GO:0005109">
    <property type="term" value="F:frizzled binding"/>
    <property type="evidence" value="ECO:0007669"/>
    <property type="project" value="Ensembl"/>
</dbReference>
<dbReference type="GO" id="GO:0042802">
    <property type="term" value="F:identical protein binding"/>
    <property type="evidence" value="ECO:0007669"/>
    <property type="project" value="Ensembl"/>
</dbReference>
<dbReference type="GO" id="GO:0005137">
    <property type="term" value="F:interleukin-5 receptor binding"/>
    <property type="evidence" value="ECO:0000315"/>
    <property type="project" value="UniProtKB"/>
</dbReference>
<dbReference type="GO" id="GO:0005546">
    <property type="term" value="F:phosphatidylinositol-4,5-bisphosphate binding"/>
    <property type="evidence" value="ECO:0007669"/>
    <property type="project" value="Ensembl"/>
</dbReference>
<dbReference type="GO" id="GO:0046982">
    <property type="term" value="F:protein heterodimerization activity"/>
    <property type="evidence" value="ECO:0007669"/>
    <property type="project" value="Ensembl"/>
</dbReference>
<dbReference type="GO" id="GO:0140311">
    <property type="term" value="F:protein sequestering activity"/>
    <property type="evidence" value="ECO:0007669"/>
    <property type="project" value="Ensembl"/>
</dbReference>
<dbReference type="GO" id="GO:0045545">
    <property type="term" value="F:syndecan binding"/>
    <property type="evidence" value="ECO:0007669"/>
    <property type="project" value="Ensembl"/>
</dbReference>
<dbReference type="GO" id="GO:0002091">
    <property type="term" value="P:negative regulation of receptor internalization"/>
    <property type="evidence" value="ECO:0000250"/>
    <property type="project" value="UniProtKB"/>
</dbReference>
<dbReference type="GO" id="GO:0000122">
    <property type="term" value="P:negative regulation of transcription by RNA polymerase II"/>
    <property type="evidence" value="ECO:0007669"/>
    <property type="project" value="Ensembl"/>
</dbReference>
<dbReference type="GO" id="GO:0030307">
    <property type="term" value="P:positive regulation of cell growth"/>
    <property type="evidence" value="ECO:0000315"/>
    <property type="project" value="UniProtKB"/>
</dbReference>
<dbReference type="GO" id="GO:0030335">
    <property type="term" value="P:positive regulation of cell migration"/>
    <property type="evidence" value="ECO:0000315"/>
    <property type="project" value="UniProtKB"/>
</dbReference>
<dbReference type="GO" id="GO:0008284">
    <property type="term" value="P:positive regulation of cell population proliferation"/>
    <property type="evidence" value="ECO:0000315"/>
    <property type="project" value="UniProtKB"/>
</dbReference>
<dbReference type="GO" id="GO:0010718">
    <property type="term" value="P:positive regulation of epithelial to mesenchymal transition"/>
    <property type="evidence" value="ECO:0000250"/>
    <property type="project" value="UniProtKB"/>
</dbReference>
<dbReference type="GO" id="GO:1903543">
    <property type="term" value="P:positive regulation of exosomal secretion"/>
    <property type="evidence" value="ECO:0007669"/>
    <property type="project" value="Ensembl"/>
</dbReference>
<dbReference type="GO" id="GO:1903553">
    <property type="term" value="P:positive regulation of extracellular exosome assembly"/>
    <property type="evidence" value="ECO:0007669"/>
    <property type="project" value="Ensembl"/>
</dbReference>
<dbReference type="GO" id="GO:0042327">
    <property type="term" value="P:positive regulation of phosphorylation"/>
    <property type="evidence" value="ECO:0007669"/>
    <property type="project" value="Ensembl"/>
</dbReference>
<dbReference type="GO" id="GO:0030511">
    <property type="term" value="P:positive regulation of transforming growth factor beta receptor signaling pathway"/>
    <property type="evidence" value="ECO:0000250"/>
    <property type="project" value="UniProtKB"/>
</dbReference>
<dbReference type="GO" id="GO:0007265">
    <property type="term" value="P:Ras protein signal transduction"/>
    <property type="evidence" value="ECO:0000353"/>
    <property type="project" value="MGI"/>
</dbReference>
<dbReference type="GO" id="GO:0007346">
    <property type="term" value="P:regulation of mitotic cell cycle"/>
    <property type="evidence" value="ECO:0000250"/>
    <property type="project" value="UniProtKB"/>
</dbReference>
<dbReference type="CDD" id="cd06721">
    <property type="entry name" value="PDZ1_syntenin-like"/>
    <property type="match status" value="1"/>
</dbReference>
<dbReference type="CDD" id="cd06794">
    <property type="entry name" value="PDZ2_syntenin-like"/>
    <property type="match status" value="1"/>
</dbReference>
<dbReference type="FunFam" id="2.30.42.10:FF:000043">
    <property type="entry name" value="Syntenin-1 isoform X1"/>
    <property type="match status" value="1"/>
</dbReference>
<dbReference type="FunFam" id="2.30.42.10:FF:000065">
    <property type="entry name" value="syntenin-1 isoform X1"/>
    <property type="match status" value="1"/>
</dbReference>
<dbReference type="Gene3D" id="2.30.42.10">
    <property type="match status" value="2"/>
</dbReference>
<dbReference type="InterPro" id="IPR051230">
    <property type="entry name" value="APP-Binding"/>
</dbReference>
<dbReference type="InterPro" id="IPR001478">
    <property type="entry name" value="PDZ"/>
</dbReference>
<dbReference type="InterPro" id="IPR036034">
    <property type="entry name" value="PDZ_sf"/>
</dbReference>
<dbReference type="PANTHER" id="PTHR12345">
    <property type="entry name" value="SYNTENIN RELATED"/>
    <property type="match status" value="1"/>
</dbReference>
<dbReference type="PANTHER" id="PTHR12345:SF10">
    <property type="entry name" value="SYNTENIN-1"/>
    <property type="match status" value="1"/>
</dbReference>
<dbReference type="Pfam" id="PF00595">
    <property type="entry name" value="PDZ"/>
    <property type="match status" value="2"/>
</dbReference>
<dbReference type="SMART" id="SM00228">
    <property type="entry name" value="PDZ"/>
    <property type="match status" value="2"/>
</dbReference>
<dbReference type="SUPFAM" id="SSF50156">
    <property type="entry name" value="PDZ domain-like"/>
    <property type="match status" value="2"/>
</dbReference>
<dbReference type="PROSITE" id="PS50106">
    <property type="entry name" value="PDZ"/>
    <property type="match status" value="2"/>
</dbReference>
<keyword id="KW-0007">Acetylation</keyword>
<keyword id="KW-0965">Cell junction</keyword>
<keyword id="KW-1003">Cell membrane</keyword>
<keyword id="KW-0963">Cytoplasm</keyword>
<keyword id="KW-0206">Cytoskeleton</keyword>
<keyword id="KW-0256">Endoplasmic reticulum</keyword>
<keyword id="KW-0446">Lipid-binding</keyword>
<keyword id="KW-0472">Membrane</keyword>
<keyword id="KW-0539">Nucleus</keyword>
<keyword id="KW-0597">Phosphoprotein</keyword>
<keyword id="KW-1185">Reference proteome</keyword>
<keyword id="KW-0677">Repeat</keyword>
<keyword id="KW-0964">Secreted</keyword>